<proteinExistence type="inferred from homology"/>
<dbReference type="EMBL" id="AP005546">
    <property type="protein sequence ID" value="BAD46217.1"/>
    <property type="molecule type" value="Genomic_DNA"/>
</dbReference>
<dbReference type="EMBL" id="AP014965">
    <property type="protein sequence ID" value="BAT09491.1"/>
    <property type="molecule type" value="Genomic_DNA"/>
</dbReference>
<dbReference type="EMBL" id="CM000146">
    <property type="status" value="NOT_ANNOTATED_CDS"/>
    <property type="molecule type" value="Genomic_DNA"/>
</dbReference>
<dbReference type="SMR" id="Q652Q0"/>
<dbReference type="FunCoup" id="Q652Q0">
    <property type="interactions" value="58"/>
</dbReference>
<dbReference type="STRING" id="39947.Q652Q0"/>
<dbReference type="PaxDb" id="39947-Q652Q0"/>
<dbReference type="EnsemblPlants" id="Os09t0568600-00">
    <property type="protein sequence ID" value="Os09t0568600-00"/>
    <property type="gene ID" value="Os09g0568600"/>
</dbReference>
<dbReference type="GeneID" id="107277596"/>
<dbReference type="Gramene" id="Os09t0568600-00">
    <property type="protein sequence ID" value="Os09t0568600-00"/>
    <property type="gene ID" value="Os09g0568600"/>
</dbReference>
<dbReference type="KEGG" id="osa:107277596"/>
<dbReference type="eggNOG" id="ENOG502QWM1">
    <property type="taxonomic scope" value="Eukaryota"/>
</dbReference>
<dbReference type="HOGENOM" id="CLU_015790_0_3_1"/>
<dbReference type="InParanoid" id="Q652Q0"/>
<dbReference type="OMA" id="DPPINAN"/>
<dbReference type="OrthoDB" id="1546383at2759"/>
<dbReference type="Proteomes" id="UP000000763">
    <property type="component" value="Chromosome 9"/>
</dbReference>
<dbReference type="Proteomes" id="UP000007752">
    <property type="component" value="Chromosome 9"/>
</dbReference>
<dbReference type="Proteomes" id="UP000059680">
    <property type="component" value="Chromosome 9"/>
</dbReference>
<dbReference type="GO" id="GO:0048046">
    <property type="term" value="C:apoplast"/>
    <property type="evidence" value="ECO:0007669"/>
    <property type="project" value="UniProtKB-SubCell"/>
</dbReference>
<dbReference type="GO" id="GO:0030145">
    <property type="term" value="F:manganese ion binding"/>
    <property type="evidence" value="ECO:0007669"/>
    <property type="project" value="InterPro"/>
</dbReference>
<dbReference type="CDD" id="cd02241">
    <property type="entry name" value="cupin_OxOx"/>
    <property type="match status" value="1"/>
</dbReference>
<dbReference type="FunFam" id="2.60.120.10:FF:000098">
    <property type="entry name" value="Germin-like protein 9-3"/>
    <property type="match status" value="1"/>
</dbReference>
<dbReference type="Gene3D" id="2.60.120.10">
    <property type="entry name" value="Jelly Rolls"/>
    <property type="match status" value="1"/>
</dbReference>
<dbReference type="InterPro" id="IPR006045">
    <property type="entry name" value="Cupin_1"/>
</dbReference>
<dbReference type="InterPro" id="IPR001929">
    <property type="entry name" value="Germin"/>
</dbReference>
<dbReference type="InterPro" id="IPR014710">
    <property type="entry name" value="RmlC-like_jellyroll"/>
</dbReference>
<dbReference type="InterPro" id="IPR011051">
    <property type="entry name" value="RmlC_Cupin_sf"/>
</dbReference>
<dbReference type="PANTHER" id="PTHR31238">
    <property type="entry name" value="GERMIN-LIKE PROTEIN SUBFAMILY 3 MEMBER 3"/>
    <property type="match status" value="1"/>
</dbReference>
<dbReference type="Pfam" id="PF00190">
    <property type="entry name" value="Cupin_1"/>
    <property type="match status" value="1"/>
</dbReference>
<dbReference type="PRINTS" id="PR00325">
    <property type="entry name" value="GERMIN"/>
</dbReference>
<dbReference type="SMART" id="SM00835">
    <property type="entry name" value="Cupin_1"/>
    <property type="match status" value="1"/>
</dbReference>
<dbReference type="SUPFAM" id="SSF51182">
    <property type="entry name" value="RmlC-like cupins"/>
    <property type="match status" value="1"/>
</dbReference>
<name>GL92_ORYSJ</name>
<gene>
    <name type="ordered locus">Os09g0568600</name>
    <name type="ordered locus">LOC_Os09g39520</name>
    <name type="ORF">OJ1003_C09.12</name>
    <name type="ORF">OsJ_029208</name>
</gene>
<sequence>MALSYYSLLLLLLAVWAPALTLVMAGDPDILTDYVIPANGNPMNITGDFFTFTGFRKVFNTSSAPEPNSFTVTKATMAEFPALNGQSVSYATLVFPPSTVNPPHTHPRSAELLLVVDGALSVGFIDTTNKLYTQDLAAGDMFVFPKGMVHFQFNSGNQPAMALSAFGSAAPGVVPVPVTVFGTGIDDAVLAKSFKTDVPTILKLKANLTPPNKS</sequence>
<evidence type="ECO:0000250" key="1"/>
<evidence type="ECO:0000255" key="2"/>
<evidence type="ECO:0000305" key="3"/>
<organism>
    <name type="scientific">Oryza sativa subsp. japonica</name>
    <name type="common">Rice</name>
    <dbReference type="NCBI Taxonomy" id="39947"/>
    <lineage>
        <taxon>Eukaryota</taxon>
        <taxon>Viridiplantae</taxon>
        <taxon>Streptophyta</taxon>
        <taxon>Embryophyta</taxon>
        <taxon>Tracheophyta</taxon>
        <taxon>Spermatophyta</taxon>
        <taxon>Magnoliopsida</taxon>
        <taxon>Liliopsida</taxon>
        <taxon>Poales</taxon>
        <taxon>Poaceae</taxon>
        <taxon>BOP clade</taxon>
        <taxon>Oryzoideae</taxon>
        <taxon>Oryzeae</taxon>
        <taxon>Oryzinae</taxon>
        <taxon>Oryza</taxon>
        <taxon>Oryza sativa</taxon>
    </lineage>
</organism>
<keyword id="KW-0052">Apoplast</keyword>
<keyword id="KW-0325">Glycoprotein</keyword>
<keyword id="KW-0464">Manganese</keyword>
<keyword id="KW-0479">Metal-binding</keyword>
<keyword id="KW-1185">Reference proteome</keyword>
<keyword id="KW-0964">Secreted</keyword>
<keyword id="KW-0732">Signal</keyword>
<comment type="function">
    <text>May play a role in plant defense. Probably has no oxalate oxidase activity even if the active site is conserved.</text>
</comment>
<comment type="subunit">
    <text evidence="1">Oligomer (believed to be a pentamer but probably hexamer).</text>
</comment>
<comment type="subcellular location">
    <subcellularLocation>
        <location evidence="1">Secreted</location>
        <location evidence="1">Extracellular space</location>
        <location evidence="1">Apoplast</location>
    </subcellularLocation>
</comment>
<comment type="similarity">
    <text evidence="3">Belongs to the germin family.</text>
</comment>
<accession>Q652Q0</accession>
<accession>A0A0P0XR45</accession>
<reference key="1">
    <citation type="journal article" date="2005" name="Nature">
        <title>The map-based sequence of the rice genome.</title>
        <authorList>
            <consortium name="International rice genome sequencing project (IRGSP)"/>
        </authorList>
    </citation>
    <scope>NUCLEOTIDE SEQUENCE [LARGE SCALE GENOMIC DNA]</scope>
    <source>
        <strain>cv. Nipponbare</strain>
    </source>
</reference>
<reference key="2">
    <citation type="journal article" date="2013" name="Rice">
        <title>Improvement of the Oryza sativa Nipponbare reference genome using next generation sequence and optical map data.</title>
        <authorList>
            <person name="Kawahara Y."/>
            <person name="de la Bastide M."/>
            <person name="Hamilton J.P."/>
            <person name="Kanamori H."/>
            <person name="McCombie W.R."/>
            <person name="Ouyang S."/>
            <person name="Schwartz D.C."/>
            <person name="Tanaka T."/>
            <person name="Wu J."/>
            <person name="Zhou S."/>
            <person name="Childs K.L."/>
            <person name="Davidson R.M."/>
            <person name="Lin H."/>
            <person name="Quesada-Ocampo L."/>
            <person name="Vaillancourt B."/>
            <person name="Sakai H."/>
            <person name="Lee S.S."/>
            <person name="Kim J."/>
            <person name="Numa H."/>
            <person name="Itoh T."/>
            <person name="Buell C.R."/>
            <person name="Matsumoto T."/>
        </authorList>
    </citation>
    <scope>GENOME REANNOTATION</scope>
    <source>
        <strain>cv. Nipponbare</strain>
    </source>
</reference>
<reference key="3">
    <citation type="journal article" date="2005" name="PLoS Biol.">
        <title>The genomes of Oryza sativa: a history of duplications.</title>
        <authorList>
            <person name="Yu J."/>
            <person name="Wang J."/>
            <person name="Lin W."/>
            <person name="Li S."/>
            <person name="Li H."/>
            <person name="Zhou J."/>
            <person name="Ni P."/>
            <person name="Dong W."/>
            <person name="Hu S."/>
            <person name="Zeng C."/>
            <person name="Zhang J."/>
            <person name="Zhang Y."/>
            <person name="Li R."/>
            <person name="Xu Z."/>
            <person name="Li S."/>
            <person name="Li X."/>
            <person name="Zheng H."/>
            <person name="Cong L."/>
            <person name="Lin L."/>
            <person name="Yin J."/>
            <person name="Geng J."/>
            <person name="Li G."/>
            <person name="Shi J."/>
            <person name="Liu J."/>
            <person name="Lv H."/>
            <person name="Li J."/>
            <person name="Wang J."/>
            <person name="Deng Y."/>
            <person name="Ran L."/>
            <person name="Shi X."/>
            <person name="Wang X."/>
            <person name="Wu Q."/>
            <person name="Li C."/>
            <person name="Ren X."/>
            <person name="Wang J."/>
            <person name="Wang X."/>
            <person name="Li D."/>
            <person name="Liu D."/>
            <person name="Zhang X."/>
            <person name="Ji Z."/>
            <person name="Zhao W."/>
            <person name="Sun Y."/>
            <person name="Zhang Z."/>
            <person name="Bao J."/>
            <person name="Han Y."/>
            <person name="Dong L."/>
            <person name="Ji J."/>
            <person name="Chen P."/>
            <person name="Wu S."/>
            <person name="Liu J."/>
            <person name="Xiao Y."/>
            <person name="Bu D."/>
            <person name="Tan J."/>
            <person name="Yang L."/>
            <person name="Ye C."/>
            <person name="Zhang J."/>
            <person name="Xu J."/>
            <person name="Zhou Y."/>
            <person name="Yu Y."/>
            <person name="Zhang B."/>
            <person name="Zhuang S."/>
            <person name="Wei H."/>
            <person name="Liu B."/>
            <person name="Lei M."/>
            <person name="Yu H."/>
            <person name="Li Y."/>
            <person name="Xu H."/>
            <person name="Wei S."/>
            <person name="He X."/>
            <person name="Fang L."/>
            <person name="Zhang Z."/>
            <person name="Zhang Y."/>
            <person name="Huang X."/>
            <person name="Su Z."/>
            <person name="Tong W."/>
            <person name="Li J."/>
            <person name="Tong Z."/>
            <person name="Li S."/>
            <person name="Ye J."/>
            <person name="Wang L."/>
            <person name="Fang L."/>
            <person name="Lei T."/>
            <person name="Chen C.-S."/>
            <person name="Chen H.-C."/>
            <person name="Xu Z."/>
            <person name="Li H."/>
            <person name="Huang H."/>
            <person name="Zhang F."/>
            <person name="Xu H."/>
            <person name="Li N."/>
            <person name="Zhao C."/>
            <person name="Li S."/>
            <person name="Dong L."/>
            <person name="Huang Y."/>
            <person name="Li L."/>
            <person name="Xi Y."/>
            <person name="Qi Q."/>
            <person name="Li W."/>
            <person name="Zhang B."/>
            <person name="Hu W."/>
            <person name="Zhang Y."/>
            <person name="Tian X."/>
            <person name="Jiao Y."/>
            <person name="Liang X."/>
            <person name="Jin J."/>
            <person name="Gao L."/>
            <person name="Zheng W."/>
            <person name="Hao B."/>
            <person name="Liu S.-M."/>
            <person name="Wang W."/>
            <person name="Yuan L."/>
            <person name="Cao M."/>
            <person name="McDermott J."/>
            <person name="Samudrala R."/>
            <person name="Wang J."/>
            <person name="Wong G.K.-S."/>
            <person name="Yang H."/>
        </authorList>
    </citation>
    <scope>NUCLEOTIDE SEQUENCE [LARGE SCALE GENOMIC DNA]</scope>
    <source>
        <strain>cv. Nipponbare</strain>
    </source>
</reference>
<feature type="signal peptide" evidence="2">
    <location>
        <begin position="1"/>
        <end position="25"/>
    </location>
</feature>
<feature type="chain" id="PRO_0000365528" description="Putative germin-like protein 9-2">
    <location>
        <begin position="26"/>
        <end position="214"/>
    </location>
</feature>
<feature type="domain" description="Cupin type-1" evidence="2">
    <location>
        <begin position="56"/>
        <end position="202"/>
    </location>
</feature>
<feature type="binding site" evidence="1">
    <location>
        <position position="104"/>
    </location>
    <ligand>
        <name>Mn(2+)</name>
        <dbReference type="ChEBI" id="CHEBI:29035"/>
    </ligand>
</feature>
<feature type="binding site" evidence="1">
    <location>
        <position position="106"/>
    </location>
    <ligand>
        <name>Mn(2+)</name>
        <dbReference type="ChEBI" id="CHEBI:29035"/>
    </ligand>
</feature>
<feature type="binding site" evidence="1">
    <location>
        <position position="111"/>
    </location>
    <ligand>
        <name>Mn(2+)</name>
        <dbReference type="ChEBI" id="CHEBI:29035"/>
    </ligand>
</feature>
<feature type="binding site" evidence="1">
    <location>
        <position position="150"/>
    </location>
    <ligand>
        <name>Mn(2+)</name>
        <dbReference type="ChEBI" id="CHEBI:29035"/>
    </ligand>
</feature>
<feature type="glycosylation site" description="N-linked (GlcNAc...) asparagine" evidence="2">
    <location>
        <position position="44"/>
    </location>
</feature>
<feature type="glycosylation site" description="N-linked (GlcNAc...) asparagine" evidence="2">
    <location>
        <position position="60"/>
    </location>
</feature>
<protein>
    <recommendedName>
        <fullName>Putative germin-like protein 9-2</fullName>
    </recommendedName>
</protein>